<dbReference type="EMBL" id="X62019">
    <property type="protein sequence ID" value="CAA43974.1"/>
    <property type="molecule type" value="mRNA"/>
</dbReference>
<dbReference type="EMBL" id="D10289">
    <property type="protein sequence ID" value="BAA01134.1"/>
    <property type="status" value="ALT_INIT"/>
    <property type="molecule type" value="Genomic_DNA"/>
</dbReference>
<dbReference type="PIR" id="A45186">
    <property type="entry name" value="A45186"/>
</dbReference>
<dbReference type="PIR" id="C37914">
    <property type="entry name" value="C37914"/>
</dbReference>
<dbReference type="PIR" id="S14800">
    <property type="entry name" value="S14800"/>
</dbReference>
<dbReference type="RefSeq" id="NP_990580.1">
    <property type="nucleotide sequence ID" value="NM_205249.2"/>
</dbReference>
<dbReference type="SMR" id="P24343"/>
<dbReference type="FunCoup" id="P24343">
    <property type="interactions" value="173"/>
</dbReference>
<dbReference type="MINT" id="P24343"/>
<dbReference type="STRING" id="9031.ENSGALP00000062834"/>
<dbReference type="PaxDb" id="9031-ENSGALP00000015070"/>
<dbReference type="Ensembl" id="ENSGALT00010060498.1">
    <property type="protein sequence ID" value="ENSGALP00010037256.1"/>
    <property type="gene ID" value="ENSGALG00010024782.1"/>
</dbReference>
<dbReference type="GeneID" id="396178"/>
<dbReference type="KEGG" id="gga:396178"/>
<dbReference type="CTD" id="3238"/>
<dbReference type="VEuPathDB" id="HostDB:geneid_396178"/>
<dbReference type="eggNOG" id="KOG0487">
    <property type="taxonomic scope" value="Eukaryota"/>
</dbReference>
<dbReference type="GeneTree" id="ENSGT00940000159938"/>
<dbReference type="HOGENOM" id="CLU_087968_1_0_1"/>
<dbReference type="InParanoid" id="P24343"/>
<dbReference type="OMA" id="YYAHDTS"/>
<dbReference type="OrthoDB" id="6159439at2759"/>
<dbReference type="PhylomeDB" id="P24343"/>
<dbReference type="TreeFam" id="TF351604"/>
<dbReference type="PRO" id="PR:P24343"/>
<dbReference type="Proteomes" id="UP000000539">
    <property type="component" value="Chromosome 7"/>
</dbReference>
<dbReference type="Bgee" id="ENSGALG00000009274">
    <property type="expression patterns" value="Expressed in colon"/>
</dbReference>
<dbReference type="GO" id="GO:0005634">
    <property type="term" value="C:nucleus"/>
    <property type="evidence" value="ECO:0007669"/>
    <property type="project" value="UniProtKB-SubCell"/>
</dbReference>
<dbReference type="GO" id="GO:0005667">
    <property type="term" value="C:transcription regulator complex"/>
    <property type="evidence" value="ECO:0007669"/>
    <property type="project" value="Ensembl"/>
</dbReference>
<dbReference type="GO" id="GO:0000981">
    <property type="term" value="F:DNA-binding transcription factor activity, RNA polymerase II-specific"/>
    <property type="evidence" value="ECO:0007669"/>
    <property type="project" value="InterPro"/>
</dbReference>
<dbReference type="GO" id="GO:1990837">
    <property type="term" value="F:sequence-specific double-stranded DNA binding"/>
    <property type="evidence" value="ECO:0000318"/>
    <property type="project" value="GO_Central"/>
</dbReference>
<dbReference type="GO" id="GO:0042733">
    <property type="term" value="P:embryonic digit morphogenesis"/>
    <property type="evidence" value="ECO:0007669"/>
    <property type="project" value="Ensembl"/>
</dbReference>
<dbReference type="GO" id="GO:0007389">
    <property type="term" value="P:pattern specification process"/>
    <property type="evidence" value="ECO:0007669"/>
    <property type="project" value="Ensembl"/>
</dbReference>
<dbReference type="GO" id="GO:0001501">
    <property type="term" value="P:skeletal system development"/>
    <property type="evidence" value="ECO:0007669"/>
    <property type="project" value="Ensembl"/>
</dbReference>
<dbReference type="CDD" id="cd00086">
    <property type="entry name" value="homeodomain"/>
    <property type="match status" value="1"/>
</dbReference>
<dbReference type="FunFam" id="1.10.10.60:FF:000130">
    <property type="entry name" value="Homeobox protein Hox-D12"/>
    <property type="match status" value="1"/>
</dbReference>
<dbReference type="Gene3D" id="1.10.10.60">
    <property type="entry name" value="Homeodomain-like"/>
    <property type="match status" value="1"/>
</dbReference>
<dbReference type="InterPro" id="IPR001356">
    <property type="entry name" value="HD"/>
</dbReference>
<dbReference type="InterPro" id="IPR020479">
    <property type="entry name" value="HD_metazoa"/>
</dbReference>
<dbReference type="InterPro" id="IPR017970">
    <property type="entry name" value="Homeobox_CS"/>
</dbReference>
<dbReference type="InterPro" id="IPR009057">
    <property type="entry name" value="Homeodomain-like_sf"/>
</dbReference>
<dbReference type="PANTHER" id="PTHR46440:SF1">
    <property type="entry name" value="HOMEOBOX PROTEIN HOX-D12"/>
    <property type="match status" value="1"/>
</dbReference>
<dbReference type="PANTHER" id="PTHR46440">
    <property type="entry name" value="HOMEOBOX PROTEIN HOX-D12-RELATED"/>
    <property type="match status" value="1"/>
</dbReference>
<dbReference type="Pfam" id="PF00046">
    <property type="entry name" value="Homeodomain"/>
    <property type="match status" value="1"/>
</dbReference>
<dbReference type="PRINTS" id="PR00024">
    <property type="entry name" value="HOMEOBOX"/>
</dbReference>
<dbReference type="SMART" id="SM00389">
    <property type="entry name" value="HOX"/>
    <property type="match status" value="1"/>
</dbReference>
<dbReference type="SUPFAM" id="SSF46689">
    <property type="entry name" value="Homeodomain-like"/>
    <property type="match status" value="1"/>
</dbReference>
<dbReference type="PROSITE" id="PS00027">
    <property type="entry name" value="HOMEOBOX_1"/>
    <property type="match status" value="1"/>
</dbReference>
<dbReference type="PROSITE" id="PS50071">
    <property type="entry name" value="HOMEOBOX_2"/>
    <property type="match status" value="1"/>
</dbReference>
<organism>
    <name type="scientific">Gallus gallus</name>
    <name type="common">Chicken</name>
    <dbReference type="NCBI Taxonomy" id="9031"/>
    <lineage>
        <taxon>Eukaryota</taxon>
        <taxon>Metazoa</taxon>
        <taxon>Chordata</taxon>
        <taxon>Craniata</taxon>
        <taxon>Vertebrata</taxon>
        <taxon>Euteleostomi</taxon>
        <taxon>Archelosauria</taxon>
        <taxon>Archosauria</taxon>
        <taxon>Dinosauria</taxon>
        <taxon>Saurischia</taxon>
        <taxon>Theropoda</taxon>
        <taxon>Coelurosauria</taxon>
        <taxon>Aves</taxon>
        <taxon>Neognathae</taxon>
        <taxon>Galloanserae</taxon>
        <taxon>Galliformes</taxon>
        <taxon>Phasianidae</taxon>
        <taxon>Phasianinae</taxon>
        <taxon>Gallus</taxon>
    </lineage>
</organism>
<sequence>MCDRSLYRSGYVGSLLNLQSPDSFYFPNLRANGSQLAALPTISYPRSSIPWTCPSPCAAQPQGHAFGGAAQPYLPGSVPISISSNSNKECLEENSKYYAHDASSKQEERCRQRQSFANDPTITHAANLKPAKYDHSSLPRSLHGSAALFEVNSCTSSLKEDIKNSVNLNLTVQPAAVQSCLRPSVQDGLPWCPTQGRSRKKRKPYTKQQIAELENEFLLNEFINRQKRKELSNRLNLSDQQVKIWFQNRRMKKKRVVMREQALSMY</sequence>
<protein>
    <recommendedName>
        <fullName>Homeobox protein Hox-D12</fullName>
    </recommendedName>
    <alternativeName>
        <fullName>Homeobox protein Hox-4.7</fullName>
        <shortName>Chox-4.7</shortName>
        <shortName>Ghox-4.7</shortName>
    </alternativeName>
    <alternativeName>
        <fullName>Homeobox protein Hox-4F</fullName>
        <shortName>Chox-4F</shortName>
    </alternativeName>
</protein>
<keyword id="KW-0217">Developmental protein</keyword>
<keyword id="KW-0238">DNA-binding</keyword>
<keyword id="KW-0371">Homeobox</keyword>
<keyword id="KW-0539">Nucleus</keyword>
<keyword id="KW-1185">Reference proteome</keyword>
<keyword id="KW-0804">Transcription</keyword>
<keyword id="KW-0805">Transcription regulation</keyword>
<evidence type="ECO:0000255" key="1">
    <source>
        <dbReference type="PROSITE-ProRule" id="PRU00108"/>
    </source>
</evidence>
<evidence type="ECO:0000269" key="2">
    <source>
    </source>
</evidence>
<evidence type="ECO:0000305" key="3"/>
<proteinExistence type="evidence at protein level"/>
<accession>P24343</accession>
<gene>
    <name type="primary">HOXD12</name>
    <name type="synonym">CHOX-4.7</name>
</gene>
<name>HXD12_CHICK</name>
<reference key="1">
    <citation type="journal article" date="1991" name="Development">
        <title>Ghox 4.7: a chick homeobox gene expressed primarily in limb buds with limb-type differences in expression.</title>
        <authorList>
            <person name="Mackem S."/>
            <person name="Mahon K.A."/>
        </authorList>
    </citation>
    <scope>NUCLEOTIDE SEQUENCE [MRNA]</scope>
</reference>
<reference key="2">
    <citation type="journal article" date="1991" name="Cell">
        <title>Involvement of the Chox-4 chicken homeobox genes in determination of anteroposterior axial polarity during limb development.</title>
        <authorList>
            <person name="Nohno T."/>
            <person name="Noji S."/>
            <person name="Koyama E."/>
            <person name="Ohyama K."/>
            <person name="Myokai F."/>
            <person name="Kuroiwa A."/>
            <person name="Saito T."/>
            <person name="Taniguchi S."/>
        </authorList>
    </citation>
    <scope>NUCLEOTIDE SEQUENCE [GENOMIC DNA] OF 196-258</scope>
</reference>
<reference key="3">
    <citation type="journal article" date="1991" name="Nature">
        <title>Expression of the homeobox Hox-4 genes and the specification of position in chick wing development.</title>
        <authorList>
            <person name="Izpisua-Belmonte J.-C."/>
            <person name="Tickle C."/>
            <person name="Dolle P."/>
            <person name="Wolpert L."/>
            <person name="Duboule D."/>
        </authorList>
    </citation>
    <scope>NUCLEOTIDE SEQUENCE OF 198-257</scope>
</reference>
<reference key="4">
    <citation type="journal article" date="2001" name="J. Biol. Chem.">
        <title>A set of Hox proteins interact with the Maf oncoprotein to inhibit its DNA binding, transactivation, and transforming activities.</title>
        <authorList>
            <person name="Kataoka K."/>
            <person name="Yoshitomo-Nakagawa K."/>
            <person name="Shioda S."/>
            <person name="Nishizawa M."/>
        </authorList>
    </citation>
    <scope>INTERACTION WITH MAF AND MAFB</scope>
</reference>
<feature type="chain" id="PRO_0000200240" description="Homeobox protein Hox-D12">
    <location>
        <begin position="1"/>
        <end position="266"/>
    </location>
</feature>
<feature type="DNA-binding region" description="Homeobox" evidence="1">
    <location>
        <begin position="198"/>
        <end position="257"/>
    </location>
</feature>
<feature type="sequence conflict" description="In Ref. 3." evidence="3" ref="3">
    <original>S</original>
    <variation>R</variation>
    <location>
        <position position="198"/>
    </location>
</feature>
<feature type="sequence conflict" description="In Ref. 3." evidence="3" ref="3">
    <original>L</original>
    <variation>V</variation>
    <location>
        <position position="219"/>
    </location>
</feature>
<comment type="function">
    <text>Sequence-specific transcription factor which is part of a developmental regulatory system that provides cells with specific positional identities on the anterior-posterior axis.</text>
</comment>
<comment type="subunit">
    <text evidence="2">Interacts with MAF and MAFB.</text>
</comment>
<comment type="subcellular location">
    <subcellularLocation>
        <location>Nucleus</location>
    </subcellularLocation>
</comment>
<comment type="tissue specificity">
    <text>Expressed primarily in limb buds.</text>
</comment>
<comment type="developmental stage">
    <text>Coordinately expressed in partially overlapping domains during wing development.</text>
</comment>
<comment type="similarity">
    <text evidence="3">Belongs to the Abd-B homeobox family.</text>
</comment>
<comment type="sequence caution" evidence="3">
    <conflict type="erroneous initiation">
        <sequence resource="EMBL-CDS" id="BAA01134"/>
    </conflict>
</comment>